<keyword id="KW-0067">ATP-binding</keyword>
<keyword id="KW-0418">Kinase</keyword>
<keyword id="KW-0460">Magnesium</keyword>
<keyword id="KW-0479">Metal-binding</keyword>
<keyword id="KW-0547">Nucleotide-binding</keyword>
<keyword id="KW-1185">Reference proteome</keyword>
<keyword id="KW-0784">Thiamine biosynthesis</keyword>
<keyword id="KW-0808">Transferase</keyword>
<organism>
    <name type="scientific">Arabidopsis thaliana</name>
    <name type="common">Mouse-ear cress</name>
    <dbReference type="NCBI Taxonomy" id="3702"/>
    <lineage>
        <taxon>Eukaryota</taxon>
        <taxon>Viridiplantae</taxon>
        <taxon>Streptophyta</taxon>
        <taxon>Embryophyta</taxon>
        <taxon>Tracheophyta</taxon>
        <taxon>Spermatophyta</taxon>
        <taxon>Magnoliopsida</taxon>
        <taxon>eudicotyledons</taxon>
        <taxon>Gunneridae</taxon>
        <taxon>Pentapetalae</taxon>
        <taxon>rosids</taxon>
        <taxon>malvids</taxon>
        <taxon>Brassicales</taxon>
        <taxon>Brassicaceae</taxon>
        <taxon>Camelineae</taxon>
        <taxon>Arabidopsis</taxon>
    </lineage>
</organism>
<gene>
    <name type="primary">THIM</name>
    <name type="ordered locus">At3g24030</name>
    <name type="ORF">F14O13</name>
</gene>
<comment type="function">
    <text evidence="2">Thiazole kinase involved in thiamine salvage pathway.</text>
</comment>
<comment type="catalytic activity">
    <reaction evidence="2">
        <text>5-(2-hydroxyethyl)-4-methylthiazole + ATP = 4-methyl-5-(2-phosphooxyethyl)-thiazole + ADP + H(+)</text>
        <dbReference type="Rhea" id="RHEA:24212"/>
        <dbReference type="ChEBI" id="CHEBI:15378"/>
        <dbReference type="ChEBI" id="CHEBI:17957"/>
        <dbReference type="ChEBI" id="CHEBI:30616"/>
        <dbReference type="ChEBI" id="CHEBI:58296"/>
        <dbReference type="ChEBI" id="CHEBI:456216"/>
        <dbReference type="EC" id="2.7.1.50"/>
    </reaction>
</comment>
<comment type="cofactor">
    <cofactor evidence="1">
        <name>Mg(2+)</name>
        <dbReference type="ChEBI" id="CHEBI:18420"/>
    </cofactor>
</comment>
<comment type="biophysicochemical properties">
    <kinetics>
        <KM evidence="2">30.5 uM for thiazole</KM>
        <KM evidence="2">44.8 uM for ATP</KM>
        <text>kcat is 0.068 sec(-1) for thiazole. kcat is 0.069 sec(-1) for ATP.</text>
    </kinetics>
</comment>
<comment type="pathway">
    <text>Cofactor biosynthesis; thiamine diphosphate biosynthesis; 4-methyl-5-(2-phosphoethyl)-thiazole from 5-(2-hydroxyethyl)-4-methylthiazole: step 1/1.</text>
</comment>
<comment type="induction">
    <text evidence="2">Not regulated by thiamine or 4-methyl-5-(2-phosphonooxyethyl)thiazole.</text>
</comment>
<comment type="disruption phenotype">
    <text evidence="2">No visible phenotype.</text>
</comment>
<comment type="similarity">
    <text evidence="3">Belongs to the Thz kinase family.</text>
</comment>
<proteinExistence type="evidence at protein level"/>
<accession>Q9LIQ4</accession>
<evidence type="ECO:0000250" key="1"/>
<evidence type="ECO:0000269" key="2">
    <source>
    </source>
</evidence>
<evidence type="ECO:0000305" key="3"/>
<name>THIM_ARATH</name>
<dbReference type="EC" id="2.7.1.50"/>
<dbReference type="EMBL" id="AP001297">
    <property type="protein sequence ID" value="BAB03021.1"/>
    <property type="molecule type" value="Genomic_DNA"/>
</dbReference>
<dbReference type="EMBL" id="CP002686">
    <property type="protein sequence ID" value="AEE76846.1"/>
    <property type="molecule type" value="Genomic_DNA"/>
</dbReference>
<dbReference type="EMBL" id="BT010426">
    <property type="protein sequence ID" value="AAQ62427.1"/>
    <property type="molecule type" value="mRNA"/>
</dbReference>
<dbReference type="EMBL" id="AK175955">
    <property type="protein sequence ID" value="BAD43718.1"/>
    <property type="molecule type" value="mRNA"/>
</dbReference>
<dbReference type="RefSeq" id="NP_001319628.1">
    <property type="nucleotide sequence ID" value="NM_001338665.1"/>
</dbReference>
<dbReference type="SMR" id="Q9LIQ4"/>
<dbReference type="FunCoup" id="Q9LIQ4">
    <property type="interactions" value="248"/>
</dbReference>
<dbReference type="STRING" id="3702.Q9LIQ4"/>
<dbReference type="iPTMnet" id="Q9LIQ4"/>
<dbReference type="PaxDb" id="3702-AT3G24030.1"/>
<dbReference type="ProteomicsDB" id="246442"/>
<dbReference type="EnsemblPlants" id="AT3G24030.1">
    <property type="protein sequence ID" value="AT3G24030.1"/>
    <property type="gene ID" value="AT3G24030"/>
</dbReference>
<dbReference type="GeneID" id="821988"/>
<dbReference type="Gramene" id="AT3G24030.1">
    <property type="protein sequence ID" value="AT3G24030.1"/>
    <property type="gene ID" value="AT3G24030"/>
</dbReference>
<dbReference type="KEGG" id="ath:AT3G24030"/>
<dbReference type="Araport" id="AT3G24030"/>
<dbReference type="TAIR" id="AT3G24030"/>
<dbReference type="eggNOG" id="ENOG502QS2M">
    <property type="taxonomic scope" value="Eukaryota"/>
</dbReference>
<dbReference type="HOGENOM" id="CLU_019943_0_1_1"/>
<dbReference type="InParanoid" id="Q9LIQ4"/>
<dbReference type="OMA" id="KRPLVHN"/>
<dbReference type="PhylomeDB" id="Q9LIQ4"/>
<dbReference type="BioCyc" id="ARA:AT3G24030-MONOMER"/>
<dbReference type="BRENDA" id="2.7.1.50">
    <property type="organism ID" value="399"/>
</dbReference>
<dbReference type="UniPathway" id="UPA00060">
    <property type="reaction ID" value="UER00139"/>
</dbReference>
<dbReference type="PRO" id="PR:Q9LIQ4"/>
<dbReference type="Proteomes" id="UP000006548">
    <property type="component" value="Chromosome 3"/>
</dbReference>
<dbReference type="ExpressionAtlas" id="Q9LIQ4">
    <property type="expression patterns" value="baseline and differential"/>
</dbReference>
<dbReference type="GO" id="GO:0005524">
    <property type="term" value="F:ATP binding"/>
    <property type="evidence" value="ECO:0007669"/>
    <property type="project" value="UniProtKB-KW"/>
</dbReference>
<dbReference type="GO" id="GO:0004417">
    <property type="term" value="F:hydroxyethylthiazole kinase activity"/>
    <property type="evidence" value="ECO:0000314"/>
    <property type="project" value="UniProtKB"/>
</dbReference>
<dbReference type="GO" id="GO:0000287">
    <property type="term" value="F:magnesium ion binding"/>
    <property type="evidence" value="ECO:0007669"/>
    <property type="project" value="InterPro"/>
</dbReference>
<dbReference type="GO" id="GO:0009228">
    <property type="term" value="P:thiamine biosynthetic process"/>
    <property type="evidence" value="ECO:0000314"/>
    <property type="project" value="UniProtKB"/>
</dbReference>
<dbReference type="GO" id="GO:0009229">
    <property type="term" value="P:thiamine diphosphate biosynthetic process"/>
    <property type="evidence" value="ECO:0007669"/>
    <property type="project" value="UniProtKB-UniPathway"/>
</dbReference>
<dbReference type="GO" id="GO:0036172">
    <property type="term" value="P:thiamine salvage"/>
    <property type="evidence" value="ECO:0000314"/>
    <property type="project" value="UniProtKB"/>
</dbReference>
<dbReference type="CDD" id="cd01170">
    <property type="entry name" value="THZ_kinase"/>
    <property type="match status" value="1"/>
</dbReference>
<dbReference type="FunFam" id="3.40.1190.20:FF:000015">
    <property type="entry name" value="Hydroxyethylthiazole kinase"/>
    <property type="match status" value="1"/>
</dbReference>
<dbReference type="Gene3D" id="3.40.1190.20">
    <property type="match status" value="1"/>
</dbReference>
<dbReference type="HAMAP" id="MF_00228">
    <property type="entry name" value="Thz_kinase"/>
    <property type="match status" value="1"/>
</dbReference>
<dbReference type="InterPro" id="IPR000417">
    <property type="entry name" value="Hyethyz_kinase"/>
</dbReference>
<dbReference type="InterPro" id="IPR029056">
    <property type="entry name" value="Ribokinase-like"/>
</dbReference>
<dbReference type="NCBIfam" id="NF006830">
    <property type="entry name" value="PRK09355.1"/>
    <property type="match status" value="1"/>
</dbReference>
<dbReference type="Pfam" id="PF02110">
    <property type="entry name" value="HK"/>
    <property type="match status" value="1"/>
</dbReference>
<dbReference type="PIRSF" id="PIRSF000513">
    <property type="entry name" value="Thz_kinase"/>
    <property type="match status" value="1"/>
</dbReference>
<dbReference type="PRINTS" id="PR01099">
    <property type="entry name" value="HYETHTZKNASE"/>
</dbReference>
<dbReference type="SUPFAM" id="SSF53613">
    <property type="entry name" value="Ribokinase-like"/>
    <property type="match status" value="1"/>
</dbReference>
<reference key="1">
    <citation type="journal article" date="2000" name="DNA Res.">
        <title>Structural analysis of Arabidopsis thaliana chromosome 3. II. Sequence features of the 4,251,695 bp regions covered by 90 P1, TAC and BAC clones.</title>
        <authorList>
            <person name="Kaneko T."/>
            <person name="Katoh T."/>
            <person name="Sato S."/>
            <person name="Nakamura Y."/>
            <person name="Asamizu E."/>
            <person name="Tabata S."/>
        </authorList>
    </citation>
    <scope>NUCLEOTIDE SEQUENCE [LARGE SCALE GENOMIC DNA]</scope>
    <source>
        <strain>cv. Columbia</strain>
    </source>
</reference>
<reference key="2">
    <citation type="journal article" date="2017" name="Plant J.">
        <title>Araport11: a complete reannotation of the Arabidopsis thaliana reference genome.</title>
        <authorList>
            <person name="Cheng C.Y."/>
            <person name="Krishnakumar V."/>
            <person name="Chan A.P."/>
            <person name="Thibaud-Nissen F."/>
            <person name="Schobel S."/>
            <person name="Town C.D."/>
        </authorList>
    </citation>
    <scope>GENOME REANNOTATION</scope>
    <source>
        <strain>cv. Columbia</strain>
    </source>
</reference>
<reference key="3">
    <citation type="journal article" date="2003" name="Science">
        <title>Empirical analysis of transcriptional activity in the Arabidopsis genome.</title>
        <authorList>
            <person name="Yamada K."/>
            <person name="Lim J."/>
            <person name="Dale J.M."/>
            <person name="Chen H."/>
            <person name="Shinn P."/>
            <person name="Palm C.J."/>
            <person name="Southwick A.M."/>
            <person name="Wu H.C."/>
            <person name="Kim C.J."/>
            <person name="Nguyen M."/>
            <person name="Pham P.K."/>
            <person name="Cheuk R.F."/>
            <person name="Karlin-Newmann G."/>
            <person name="Liu S.X."/>
            <person name="Lam B."/>
            <person name="Sakano H."/>
            <person name="Wu T."/>
            <person name="Yu G."/>
            <person name="Miranda M."/>
            <person name="Quach H.L."/>
            <person name="Tripp M."/>
            <person name="Chang C.H."/>
            <person name="Lee J.M."/>
            <person name="Toriumi M.J."/>
            <person name="Chan M.M."/>
            <person name="Tang C.C."/>
            <person name="Onodera C.S."/>
            <person name="Deng J.M."/>
            <person name="Akiyama K."/>
            <person name="Ansari Y."/>
            <person name="Arakawa T."/>
            <person name="Banh J."/>
            <person name="Banno F."/>
            <person name="Bowser L."/>
            <person name="Brooks S.Y."/>
            <person name="Carninci P."/>
            <person name="Chao Q."/>
            <person name="Choy N."/>
            <person name="Enju A."/>
            <person name="Goldsmith A.D."/>
            <person name="Gurjal M."/>
            <person name="Hansen N.F."/>
            <person name="Hayashizaki Y."/>
            <person name="Johnson-Hopson C."/>
            <person name="Hsuan V.W."/>
            <person name="Iida K."/>
            <person name="Karnes M."/>
            <person name="Khan S."/>
            <person name="Koesema E."/>
            <person name="Ishida J."/>
            <person name="Jiang P.X."/>
            <person name="Jones T."/>
            <person name="Kawai J."/>
            <person name="Kamiya A."/>
            <person name="Meyers C."/>
            <person name="Nakajima M."/>
            <person name="Narusaka M."/>
            <person name="Seki M."/>
            <person name="Sakurai T."/>
            <person name="Satou M."/>
            <person name="Tamse R."/>
            <person name="Vaysberg M."/>
            <person name="Wallender E.K."/>
            <person name="Wong C."/>
            <person name="Yamamura Y."/>
            <person name="Yuan S."/>
            <person name="Shinozaki K."/>
            <person name="Davis R.W."/>
            <person name="Theologis A."/>
            <person name="Ecker J.R."/>
        </authorList>
    </citation>
    <scope>NUCLEOTIDE SEQUENCE [LARGE SCALE MRNA]</scope>
    <source>
        <strain>cv. Columbia</strain>
    </source>
</reference>
<reference key="4">
    <citation type="submission" date="2004-09" db="EMBL/GenBank/DDBJ databases">
        <title>Large-scale analysis of RIKEN Arabidopsis full-length (RAFL) cDNAs.</title>
        <authorList>
            <person name="Totoki Y."/>
            <person name="Seki M."/>
            <person name="Ishida J."/>
            <person name="Nakajima M."/>
            <person name="Enju A."/>
            <person name="Kamiya A."/>
            <person name="Narusaka M."/>
            <person name="Shin-i T."/>
            <person name="Nakagawa M."/>
            <person name="Sakamoto N."/>
            <person name="Oishi K."/>
            <person name="Kohara Y."/>
            <person name="Kobayashi M."/>
            <person name="Toyoda A."/>
            <person name="Sakaki Y."/>
            <person name="Sakurai T."/>
            <person name="Iida K."/>
            <person name="Akiyama K."/>
            <person name="Satou M."/>
            <person name="Toyoda T."/>
            <person name="Konagaya A."/>
            <person name="Carninci P."/>
            <person name="Kawai J."/>
            <person name="Hayashizaki Y."/>
            <person name="Shinozaki K."/>
        </authorList>
    </citation>
    <scope>NUCLEOTIDE SEQUENCE [LARGE SCALE MRNA]</scope>
    <source>
        <strain>cv. Columbia</strain>
    </source>
</reference>
<reference key="5">
    <citation type="journal article" date="2013" name="Phytochemistry">
        <title>Identification of the thiamin salvage enzyme thiazole kinase in Arabidopsis and maize.</title>
        <authorList>
            <person name="Yazdani M."/>
            <person name="Zallot R."/>
            <person name="Tunc-Ozdemir M."/>
            <person name="de Crecy-Lagard V."/>
            <person name="Shintani D.K."/>
            <person name="Hanson A.D."/>
        </authorList>
    </citation>
    <scope>FUNCTION</scope>
    <scope>CATALYTIC ACTIVITY</scope>
    <scope>BIOPHYSICOCHEMICAL PROPERTIES</scope>
    <scope>DISRUPTION PHENOTYPE</scope>
    <scope>INDUCTION BY THIAMINE AND 4-METHYL-5-(2-PHOSPHONOOXYETHYL)THIAZOLE</scope>
</reference>
<feature type="chain" id="PRO_0000424279" description="Hydroxyethylthiazole kinase">
    <location>
        <begin position="1"/>
        <end position="276"/>
    </location>
</feature>
<feature type="binding site" evidence="1">
    <location>
        <position position="53"/>
    </location>
    <ligand>
        <name>substrate</name>
    </ligand>
</feature>
<feature type="binding site" evidence="1">
    <location>
        <position position="202"/>
    </location>
    <ligand>
        <name>substrate</name>
    </ligand>
</feature>
<protein>
    <recommendedName>
        <fullName>Hydroxyethylthiazole kinase</fullName>
        <ecNumber>2.7.1.50</ecNumber>
    </recommendedName>
    <alternativeName>
        <fullName>4-methyl-5-beta-hydroxyethylthiazole kinase</fullName>
        <shortName>TH kinase</shortName>
        <shortName>Thz kinase</shortName>
    </alternativeName>
</protein>
<sequence>MESKSEQNEWSSGVWAHLTAVRQQSPLVQCITNFVSMDLVANTLLSAGASPAMVHSVVEIPDFTPHIHALCVNVGTLTPDWLPSMKAAAELASQLRKPWVLDPAAVSCSGFRLKACLELIELKPTVIKGNGSEIIALSSASRGQTKGADSSHESTDAIEAAKSLAMSSGAVVAVSGAVDIVTDGKQVIGVHNGTKMMQQITATGCSLAGLIVAFLAIDSSRVLEATVSAMAVFGIAGELGEAMANGPASLRMHLIDCLYGLDETTVLKRVNVTRLG</sequence>